<reference key="1">
    <citation type="journal article" date="1994" name="J. Bacteriol.">
        <title>Octopine and nopaline oxidases from Ti plasmids of Agrobacterium tumefaciens: molecular analysis, relationship, and functional characterization.</title>
        <authorList>
            <person name="Zanker H."/>
            <person name="Lurz G."/>
            <person name="Langridge U."/>
            <person name="Langridge P."/>
            <person name="Kreusch D."/>
            <person name="Schroeder J."/>
        </authorList>
    </citation>
    <scope>NUCLEOTIDE SEQUENCE [GENOMIC DNA]</scope>
</reference>
<keyword id="KW-0560">Oxidoreductase</keyword>
<keyword id="KW-0614">Plasmid</keyword>
<geneLocation type="plasmid">
    <name>pTiAch5</name>
</geneLocation>
<proteinExistence type="inferred from homology"/>
<comment type="function">
    <text evidence="1">Oxidative cleavage of octopine into L-arginine and pyruvate.</text>
</comment>
<comment type="pathway">
    <text>Opine metabolism; octopine degradation.</text>
</comment>
<comment type="subunit">
    <text>Heterodimer of a subunit A and a subunit B.</text>
</comment>
<gene>
    <name type="primary">ooxB</name>
</gene>
<accession>Q59159</accession>
<evidence type="ECO:0000250" key="1"/>
<organism>
    <name type="scientific">Agrobacterium tumefaciens (strain Ach5)</name>
    <dbReference type="NCBI Taxonomy" id="176298"/>
    <lineage>
        <taxon>Bacteria</taxon>
        <taxon>Pseudomonadati</taxon>
        <taxon>Pseudomonadota</taxon>
        <taxon>Alphaproteobacteria</taxon>
        <taxon>Hyphomicrobiales</taxon>
        <taxon>Rhizobiaceae</taxon>
        <taxon>Rhizobium/Agrobacterium group</taxon>
        <taxon>Agrobacterium</taxon>
        <taxon>Agrobacterium tumefaciens complex</taxon>
    </lineage>
</organism>
<feature type="chain" id="PRO_0000058055" description="Opine oxidase subunit B">
    <location>
        <begin position="1"/>
        <end position="371"/>
    </location>
</feature>
<protein>
    <recommendedName>
        <fullName>Opine oxidase subunit B</fullName>
        <ecNumber>1.-.-.-</ecNumber>
    </recommendedName>
    <alternativeName>
        <fullName>Octopine oxidase subunit B</fullName>
    </alternativeName>
</protein>
<dbReference type="EC" id="1.-.-.-"/>
<dbReference type="EMBL" id="Z30328">
    <property type="protein sequence ID" value="CAA82987.1"/>
    <property type="molecule type" value="Genomic_DNA"/>
</dbReference>
<dbReference type="PIR" id="S55588">
    <property type="entry name" value="S55588"/>
</dbReference>
<dbReference type="RefSeq" id="NP_059710.1">
    <property type="nucleotide sequence ID" value="NC_002377.1"/>
</dbReference>
<dbReference type="SMR" id="Q59159"/>
<dbReference type="BioCyc" id="MetaCyc:MONOMER-11549"/>
<dbReference type="UniPathway" id="UPA00737"/>
<dbReference type="GO" id="GO:0005737">
    <property type="term" value="C:cytoplasm"/>
    <property type="evidence" value="ECO:0007669"/>
    <property type="project" value="TreeGrafter"/>
</dbReference>
<dbReference type="GO" id="GO:0016491">
    <property type="term" value="F:oxidoreductase activity"/>
    <property type="evidence" value="ECO:0007669"/>
    <property type="project" value="UniProtKB-KW"/>
</dbReference>
<dbReference type="Gene3D" id="3.30.9.10">
    <property type="entry name" value="D-Amino Acid Oxidase, subunit A, domain 2"/>
    <property type="match status" value="1"/>
</dbReference>
<dbReference type="Gene3D" id="3.50.50.60">
    <property type="entry name" value="FAD/NAD(P)-binding domain"/>
    <property type="match status" value="1"/>
</dbReference>
<dbReference type="InterPro" id="IPR006076">
    <property type="entry name" value="FAD-dep_OxRdtase"/>
</dbReference>
<dbReference type="InterPro" id="IPR036188">
    <property type="entry name" value="FAD/NAD-bd_sf"/>
</dbReference>
<dbReference type="PANTHER" id="PTHR13847:SF289">
    <property type="entry name" value="GLYCINE OXIDASE"/>
    <property type="match status" value="1"/>
</dbReference>
<dbReference type="PANTHER" id="PTHR13847">
    <property type="entry name" value="SARCOSINE DEHYDROGENASE-RELATED"/>
    <property type="match status" value="1"/>
</dbReference>
<dbReference type="Pfam" id="PF01266">
    <property type="entry name" value="DAO"/>
    <property type="match status" value="1"/>
</dbReference>
<dbReference type="SUPFAM" id="SSF54373">
    <property type="entry name" value="FAD-linked reductases, C-terminal domain"/>
    <property type="match status" value="1"/>
</dbReference>
<dbReference type="SUPFAM" id="SSF51905">
    <property type="entry name" value="FAD/NAD(P)-binding domain"/>
    <property type="match status" value="1"/>
</dbReference>
<name>OOXB_AGRT4</name>
<sequence>MYEVDMTIIGGGLVGASIAWGLARSGTKPLVLDGADLDLRASRANFALVWVQGKGLHAPHYALWSDASARRWPTMANTLLDDSGIDVGLQQDGAFTFALSEEELEANRQDMESIELETNGRAPQFEVLDRQQTLDRVLGIGPEVVGSIYCAADGHVNALRLFHALHAAMERQGATYRPNHPVQSIEPTTGGFILKGEAFSILSRRIVLAAGLDNKRLAPMVGLSCPLKRSKGQILVTEKTQTALPCLSAGMRQADEGGIMIGDSEETDNTRISSSPDISAVLASRALRIFPALSDLNVVRSWTGFRVKTADGVPIYDHSERYPGAFLVACHSGVTLAANHALIVAQQIAAGQLEDELSVFSARRFHAQQAV</sequence>